<reference key="1">
    <citation type="journal article" date="2007" name="PLoS ONE">
        <title>Complete genomic characterization of a pathogenic A.II strain of Francisella tularensis subspecies tularensis.</title>
        <authorList>
            <person name="Beckstrom-Sternberg S.M."/>
            <person name="Auerbach R.K."/>
            <person name="Godbole S."/>
            <person name="Pearson J.V."/>
            <person name="Beckstrom-Sternberg J.S."/>
            <person name="Deng Z."/>
            <person name="Munk C."/>
            <person name="Kubota K."/>
            <person name="Zhou Y."/>
            <person name="Bruce D."/>
            <person name="Noronha J."/>
            <person name="Scheuermann R.H."/>
            <person name="Wang A."/>
            <person name="Wei X."/>
            <person name="Wang J."/>
            <person name="Hao J."/>
            <person name="Wagner D.M."/>
            <person name="Brettin T.S."/>
            <person name="Brown N."/>
            <person name="Gilna P."/>
            <person name="Keim P.S."/>
        </authorList>
    </citation>
    <scope>NUCLEOTIDE SEQUENCE [LARGE SCALE GENOMIC DNA]</scope>
    <source>
        <strain>WY96-3418</strain>
    </source>
</reference>
<protein>
    <recommendedName>
        <fullName evidence="1">Alanine racemase</fullName>
        <ecNumber evidence="1">5.1.1.1</ecNumber>
    </recommendedName>
</protein>
<organism>
    <name type="scientific">Francisella tularensis subsp. tularensis (strain WY96-3418)</name>
    <dbReference type="NCBI Taxonomy" id="418136"/>
    <lineage>
        <taxon>Bacteria</taxon>
        <taxon>Pseudomonadati</taxon>
        <taxon>Pseudomonadota</taxon>
        <taxon>Gammaproteobacteria</taxon>
        <taxon>Thiotrichales</taxon>
        <taxon>Francisellaceae</taxon>
        <taxon>Francisella</taxon>
    </lineage>
</organism>
<accession>A4IZ25</accession>
<dbReference type="EC" id="5.1.1.1" evidence="1"/>
<dbReference type="EMBL" id="CP000608">
    <property type="protein sequence ID" value="ABO47176.1"/>
    <property type="molecule type" value="Genomic_DNA"/>
</dbReference>
<dbReference type="RefSeq" id="WP_003026696.1">
    <property type="nucleotide sequence ID" value="NC_009257.1"/>
</dbReference>
<dbReference type="SMR" id="A4IZ25"/>
<dbReference type="KEGG" id="ftw:FTW_1439"/>
<dbReference type="HOGENOM" id="CLU_028393_2_2_6"/>
<dbReference type="UniPathway" id="UPA00042">
    <property type="reaction ID" value="UER00497"/>
</dbReference>
<dbReference type="GO" id="GO:0005829">
    <property type="term" value="C:cytosol"/>
    <property type="evidence" value="ECO:0007669"/>
    <property type="project" value="TreeGrafter"/>
</dbReference>
<dbReference type="GO" id="GO:0008784">
    <property type="term" value="F:alanine racemase activity"/>
    <property type="evidence" value="ECO:0007669"/>
    <property type="project" value="UniProtKB-UniRule"/>
</dbReference>
<dbReference type="GO" id="GO:0030170">
    <property type="term" value="F:pyridoxal phosphate binding"/>
    <property type="evidence" value="ECO:0007669"/>
    <property type="project" value="UniProtKB-UniRule"/>
</dbReference>
<dbReference type="GO" id="GO:0030632">
    <property type="term" value="P:D-alanine biosynthetic process"/>
    <property type="evidence" value="ECO:0007669"/>
    <property type="project" value="UniProtKB-UniRule"/>
</dbReference>
<dbReference type="CDD" id="cd00430">
    <property type="entry name" value="PLPDE_III_AR"/>
    <property type="match status" value="1"/>
</dbReference>
<dbReference type="FunFam" id="3.20.20.10:FF:000002">
    <property type="entry name" value="Alanine racemase"/>
    <property type="match status" value="1"/>
</dbReference>
<dbReference type="Gene3D" id="3.20.20.10">
    <property type="entry name" value="Alanine racemase"/>
    <property type="match status" value="1"/>
</dbReference>
<dbReference type="Gene3D" id="2.40.37.10">
    <property type="entry name" value="Lyase, Ornithine Decarboxylase, Chain A, domain 1"/>
    <property type="match status" value="1"/>
</dbReference>
<dbReference type="HAMAP" id="MF_01201">
    <property type="entry name" value="Ala_racemase"/>
    <property type="match status" value="1"/>
</dbReference>
<dbReference type="InterPro" id="IPR000821">
    <property type="entry name" value="Ala_racemase"/>
</dbReference>
<dbReference type="InterPro" id="IPR009006">
    <property type="entry name" value="Ala_racemase/Decarboxylase_C"/>
</dbReference>
<dbReference type="InterPro" id="IPR011079">
    <property type="entry name" value="Ala_racemase_C"/>
</dbReference>
<dbReference type="InterPro" id="IPR001608">
    <property type="entry name" value="Ala_racemase_N"/>
</dbReference>
<dbReference type="InterPro" id="IPR029066">
    <property type="entry name" value="PLP-binding_barrel"/>
</dbReference>
<dbReference type="NCBIfam" id="TIGR00492">
    <property type="entry name" value="alr"/>
    <property type="match status" value="1"/>
</dbReference>
<dbReference type="PANTHER" id="PTHR30511">
    <property type="entry name" value="ALANINE RACEMASE"/>
    <property type="match status" value="1"/>
</dbReference>
<dbReference type="PANTHER" id="PTHR30511:SF0">
    <property type="entry name" value="ALANINE RACEMASE, CATABOLIC-RELATED"/>
    <property type="match status" value="1"/>
</dbReference>
<dbReference type="Pfam" id="PF00842">
    <property type="entry name" value="Ala_racemase_C"/>
    <property type="match status" value="1"/>
</dbReference>
<dbReference type="Pfam" id="PF01168">
    <property type="entry name" value="Ala_racemase_N"/>
    <property type="match status" value="1"/>
</dbReference>
<dbReference type="PRINTS" id="PR00992">
    <property type="entry name" value="ALARACEMASE"/>
</dbReference>
<dbReference type="SMART" id="SM01005">
    <property type="entry name" value="Ala_racemase_C"/>
    <property type="match status" value="1"/>
</dbReference>
<dbReference type="SUPFAM" id="SSF50621">
    <property type="entry name" value="Alanine racemase C-terminal domain-like"/>
    <property type="match status" value="1"/>
</dbReference>
<dbReference type="SUPFAM" id="SSF51419">
    <property type="entry name" value="PLP-binding barrel"/>
    <property type="match status" value="1"/>
</dbReference>
<evidence type="ECO:0000255" key="1">
    <source>
        <dbReference type="HAMAP-Rule" id="MF_01201"/>
    </source>
</evidence>
<comment type="function">
    <text evidence="1">Catalyzes the interconversion of L-alanine and D-alanine. May also act on other amino acids.</text>
</comment>
<comment type="catalytic activity">
    <reaction evidence="1">
        <text>L-alanine = D-alanine</text>
        <dbReference type="Rhea" id="RHEA:20249"/>
        <dbReference type="ChEBI" id="CHEBI:57416"/>
        <dbReference type="ChEBI" id="CHEBI:57972"/>
        <dbReference type="EC" id="5.1.1.1"/>
    </reaction>
</comment>
<comment type="cofactor">
    <cofactor evidence="1">
        <name>pyridoxal 5'-phosphate</name>
        <dbReference type="ChEBI" id="CHEBI:597326"/>
    </cofactor>
</comment>
<comment type="pathway">
    <text evidence="1">Amino-acid biosynthesis; D-alanine biosynthesis; D-alanine from L-alanine: step 1/1.</text>
</comment>
<comment type="similarity">
    <text evidence="1">Belongs to the alanine racemase family.</text>
</comment>
<feature type="chain" id="PRO_1000073097" description="Alanine racemase">
    <location>
        <begin position="1"/>
        <end position="365"/>
    </location>
</feature>
<feature type="active site" description="Proton acceptor; specific for D-alanine" evidence="1">
    <location>
        <position position="32"/>
    </location>
</feature>
<feature type="active site" description="Proton acceptor; specific for L-alanine" evidence="1">
    <location>
        <position position="257"/>
    </location>
</feature>
<feature type="binding site" evidence="1">
    <location>
        <position position="128"/>
    </location>
    <ligand>
        <name>substrate</name>
    </ligand>
</feature>
<feature type="binding site" evidence="1">
    <location>
        <position position="305"/>
    </location>
    <ligand>
        <name>substrate</name>
    </ligand>
</feature>
<feature type="modified residue" description="N6-(pyridoxal phosphate)lysine" evidence="1">
    <location>
        <position position="32"/>
    </location>
</feature>
<keyword id="KW-0413">Isomerase</keyword>
<keyword id="KW-0663">Pyridoxal phosphate</keyword>
<sequence>MNILKISKQTLRNNIKIIREYIGNAKMCFPVKANAYGHGIEDIVENTHDLVDFFAVANSLEAFRVTAVAKNPVLVFGVIYYEYIEKMISENIRVSIQDYEDIEKLEQIAKELDKKVYAHININTGMNRMGVDYNDACRTIQRAYESDWLILEGVYSHLACADNRDHPTNIKQKNRFDSIVKFTKGLSQDIICHLSNSYGFLGQKGICYDMVRPGILSYGFLPEFYVDRVIREIKPIARLLSKVVKIITLQEGEGVGYSLIYRGFEGEQLAVIPIGYGDGFPRELGDRGFVNINDVMYPMAGRMSMDSLTVSLGINEYDVKVGDTVELISAIPRNRNSAFSIAKQTNTIEYDIMSTLNDRIIRKII</sequence>
<gene>
    <name type="primary">alr</name>
    <name type="ordered locus">FTW_1439</name>
</gene>
<name>ALR_FRATW</name>
<proteinExistence type="inferred from homology"/>